<reference key="1">
    <citation type="journal article" date="2005" name="J. Bacteriol.">
        <title>The genome of Sulfolobus acidocaldarius, a model organism of the Crenarchaeota.</title>
        <authorList>
            <person name="Chen L."/>
            <person name="Bruegger K."/>
            <person name="Skovgaard M."/>
            <person name="Redder P."/>
            <person name="She Q."/>
            <person name="Torarinsson E."/>
            <person name="Greve B."/>
            <person name="Awayez M."/>
            <person name="Zibat A."/>
            <person name="Klenk H.-P."/>
            <person name="Garrett R.A."/>
        </authorList>
    </citation>
    <scope>NUCLEOTIDE SEQUENCE [LARGE SCALE GENOMIC DNA]</scope>
    <source>
        <strain>ATCC 33909 / DSM 639 / JCM 8929 / NBRC 15157 / NCIMB 11770</strain>
    </source>
</reference>
<name>SYM_SULAC</name>
<keyword id="KW-0030">Aminoacyl-tRNA synthetase</keyword>
<keyword id="KW-0067">ATP-binding</keyword>
<keyword id="KW-0963">Cytoplasm</keyword>
<keyword id="KW-0436">Ligase</keyword>
<keyword id="KW-0479">Metal-binding</keyword>
<keyword id="KW-0547">Nucleotide-binding</keyword>
<keyword id="KW-0648">Protein biosynthesis</keyword>
<keyword id="KW-1185">Reference proteome</keyword>
<keyword id="KW-0862">Zinc</keyword>
<comment type="function">
    <text evidence="1">Is required not only for elongation of protein synthesis but also for the initiation of all mRNA translation through initiator tRNA(fMet) aminoacylation.</text>
</comment>
<comment type="catalytic activity">
    <reaction evidence="1">
        <text>tRNA(Met) + L-methionine + ATP = L-methionyl-tRNA(Met) + AMP + diphosphate</text>
        <dbReference type="Rhea" id="RHEA:13481"/>
        <dbReference type="Rhea" id="RHEA-COMP:9667"/>
        <dbReference type="Rhea" id="RHEA-COMP:9698"/>
        <dbReference type="ChEBI" id="CHEBI:30616"/>
        <dbReference type="ChEBI" id="CHEBI:33019"/>
        <dbReference type="ChEBI" id="CHEBI:57844"/>
        <dbReference type="ChEBI" id="CHEBI:78442"/>
        <dbReference type="ChEBI" id="CHEBI:78530"/>
        <dbReference type="ChEBI" id="CHEBI:456215"/>
        <dbReference type="EC" id="6.1.1.10"/>
    </reaction>
</comment>
<comment type="cofactor">
    <cofactor evidence="1">
        <name>Zn(2+)</name>
        <dbReference type="ChEBI" id="CHEBI:29105"/>
    </cofactor>
    <text evidence="1">Binds 1 zinc ion per subunit.</text>
</comment>
<comment type="subcellular location">
    <subcellularLocation>
        <location evidence="1">Cytoplasm</location>
    </subcellularLocation>
</comment>
<comment type="similarity">
    <text evidence="1">Belongs to the class-I aminoacyl-tRNA synthetase family. MetG type 1 subfamily.</text>
</comment>
<proteinExistence type="inferred from homology"/>
<gene>
    <name evidence="1" type="primary">metG</name>
    <name type="ordered locus">Saci_1544</name>
</gene>
<accession>Q4J8M3</accession>
<dbReference type="EC" id="6.1.1.10" evidence="1"/>
<dbReference type="EMBL" id="CP000077">
    <property type="protein sequence ID" value="AAY80857.1"/>
    <property type="molecule type" value="Genomic_DNA"/>
</dbReference>
<dbReference type="RefSeq" id="WP_011278359.1">
    <property type="nucleotide sequence ID" value="NC_007181.1"/>
</dbReference>
<dbReference type="SMR" id="Q4J8M3"/>
<dbReference type="STRING" id="330779.Saci_1544"/>
<dbReference type="GeneID" id="14552037"/>
<dbReference type="GeneID" id="78441887"/>
<dbReference type="KEGG" id="sai:Saci_1544"/>
<dbReference type="PATRIC" id="fig|330779.12.peg.1484"/>
<dbReference type="eggNOG" id="arCOG00810">
    <property type="taxonomic scope" value="Archaea"/>
</dbReference>
<dbReference type="HOGENOM" id="CLU_009710_1_2_2"/>
<dbReference type="Proteomes" id="UP000001018">
    <property type="component" value="Chromosome"/>
</dbReference>
<dbReference type="GO" id="GO:0017101">
    <property type="term" value="C:aminoacyl-tRNA synthetase multienzyme complex"/>
    <property type="evidence" value="ECO:0007669"/>
    <property type="project" value="TreeGrafter"/>
</dbReference>
<dbReference type="GO" id="GO:0005829">
    <property type="term" value="C:cytosol"/>
    <property type="evidence" value="ECO:0007669"/>
    <property type="project" value="TreeGrafter"/>
</dbReference>
<dbReference type="GO" id="GO:0005524">
    <property type="term" value="F:ATP binding"/>
    <property type="evidence" value="ECO:0007669"/>
    <property type="project" value="UniProtKB-UniRule"/>
</dbReference>
<dbReference type="GO" id="GO:0046872">
    <property type="term" value="F:metal ion binding"/>
    <property type="evidence" value="ECO:0007669"/>
    <property type="project" value="UniProtKB-KW"/>
</dbReference>
<dbReference type="GO" id="GO:0004825">
    <property type="term" value="F:methionine-tRNA ligase activity"/>
    <property type="evidence" value="ECO:0007669"/>
    <property type="project" value="UniProtKB-UniRule"/>
</dbReference>
<dbReference type="GO" id="GO:0006431">
    <property type="term" value="P:methionyl-tRNA aminoacylation"/>
    <property type="evidence" value="ECO:0007669"/>
    <property type="project" value="UniProtKB-UniRule"/>
</dbReference>
<dbReference type="CDD" id="cd07957">
    <property type="entry name" value="Anticodon_Ia_Met"/>
    <property type="match status" value="1"/>
</dbReference>
<dbReference type="CDD" id="cd00814">
    <property type="entry name" value="MetRS_core"/>
    <property type="match status" value="1"/>
</dbReference>
<dbReference type="FunFam" id="2.20.28.20:FF:000001">
    <property type="entry name" value="Methionine--tRNA ligase"/>
    <property type="match status" value="1"/>
</dbReference>
<dbReference type="Gene3D" id="3.40.50.620">
    <property type="entry name" value="HUPs"/>
    <property type="match status" value="1"/>
</dbReference>
<dbReference type="Gene3D" id="1.10.730.10">
    <property type="entry name" value="Isoleucyl-tRNA Synthetase, Domain 1"/>
    <property type="match status" value="1"/>
</dbReference>
<dbReference type="Gene3D" id="2.20.28.20">
    <property type="entry name" value="Methionyl-tRNA synthetase, Zn-domain"/>
    <property type="match status" value="1"/>
</dbReference>
<dbReference type="HAMAP" id="MF_00098">
    <property type="entry name" value="Met_tRNA_synth_type1"/>
    <property type="match status" value="1"/>
</dbReference>
<dbReference type="InterPro" id="IPR001412">
    <property type="entry name" value="aa-tRNA-synth_I_CS"/>
</dbReference>
<dbReference type="InterPro" id="IPR041872">
    <property type="entry name" value="Anticodon_Met"/>
</dbReference>
<dbReference type="InterPro" id="IPR023458">
    <property type="entry name" value="Met-tRNA_ligase_1"/>
</dbReference>
<dbReference type="InterPro" id="IPR014758">
    <property type="entry name" value="Met-tRNA_synth"/>
</dbReference>
<dbReference type="InterPro" id="IPR015413">
    <property type="entry name" value="Methionyl/Leucyl_tRNA_Synth"/>
</dbReference>
<dbReference type="InterPro" id="IPR033911">
    <property type="entry name" value="MetRS_core"/>
</dbReference>
<dbReference type="InterPro" id="IPR029038">
    <property type="entry name" value="MetRS_Zn"/>
</dbReference>
<dbReference type="InterPro" id="IPR014729">
    <property type="entry name" value="Rossmann-like_a/b/a_fold"/>
</dbReference>
<dbReference type="InterPro" id="IPR009080">
    <property type="entry name" value="tRNAsynth_Ia_anticodon-bd"/>
</dbReference>
<dbReference type="NCBIfam" id="TIGR00398">
    <property type="entry name" value="metG"/>
    <property type="match status" value="1"/>
</dbReference>
<dbReference type="PANTHER" id="PTHR45765">
    <property type="entry name" value="METHIONINE--TRNA LIGASE"/>
    <property type="match status" value="1"/>
</dbReference>
<dbReference type="PANTHER" id="PTHR45765:SF1">
    <property type="entry name" value="METHIONINE--TRNA LIGASE, CYTOPLASMIC"/>
    <property type="match status" value="1"/>
</dbReference>
<dbReference type="Pfam" id="PF19303">
    <property type="entry name" value="Anticodon_3"/>
    <property type="match status" value="1"/>
</dbReference>
<dbReference type="Pfam" id="PF09334">
    <property type="entry name" value="tRNA-synt_1g"/>
    <property type="match status" value="1"/>
</dbReference>
<dbReference type="PRINTS" id="PR01041">
    <property type="entry name" value="TRNASYNTHMET"/>
</dbReference>
<dbReference type="SUPFAM" id="SSF47323">
    <property type="entry name" value="Anticodon-binding domain of a subclass of class I aminoacyl-tRNA synthetases"/>
    <property type="match status" value="1"/>
</dbReference>
<dbReference type="SUPFAM" id="SSF57770">
    <property type="entry name" value="Methionyl-tRNA synthetase (MetRS), Zn-domain"/>
    <property type="match status" value="1"/>
</dbReference>
<dbReference type="SUPFAM" id="SSF52374">
    <property type="entry name" value="Nucleotidylyl transferase"/>
    <property type="match status" value="1"/>
</dbReference>
<dbReference type="PROSITE" id="PS00178">
    <property type="entry name" value="AA_TRNA_LIGASE_I"/>
    <property type="match status" value="1"/>
</dbReference>
<organism>
    <name type="scientific">Sulfolobus acidocaldarius (strain ATCC 33909 / DSM 639 / JCM 8929 / NBRC 15157 / NCIMB 11770)</name>
    <dbReference type="NCBI Taxonomy" id="330779"/>
    <lineage>
        <taxon>Archaea</taxon>
        <taxon>Thermoproteota</taxon>
        <taxon>Thermoprotei</taxon>
        <taxon>Sulfolobales</taxon>
        <taxon>Sulfolobaceae</taxon>
        <taxon>Sulfolobus</taxon>
    </lineage>
</organism>
<sequence length="571" mass="66079">MKVLVTSAWPYVNAVPHLGNLIGSILSADVFARYARLKYGKENVVFVSGSDEHGTPIEIEARKRNIEPKKLTDQAHAYDKKLFIDTWKISFDNYSRTESEVHKEFVRNFLVKLEKYIKVEEDEIPYCEKDKLFLPDRFIKGVCPYCGFEDARGDQCDNCGRLLTPRSLVNAKCALCGNPPVFKVTKHWFFDLSEFGDKIRDWISSSSTMPDNVKSVALSWVKEGLRPRSITRDNMWGIPAPFAGAENKTIYVWFEALLGYLSATVEYFKNLGKEEMWKEFWLYNDTKTYYFIGKDNIPFHAVILPAMLMASNEKYNLPSVIAATEYLLYEGQKFSKSRKIGVWIDEADKLMDVEYWRFILIRLRPEEKDTNFTWREALRIVNTELNDDIGNYANRVLSMVKRYYDGVVPSPKEAIFNDEDKNLITLIKESPKRMGELFELGKIKAGSEEILKLARSGNLYLNNRAPWSLVKTNKEEANNVLYISVNSLRTLAIMLYPIMPTYSSNLYQQLGLSNLESETWDSAGSLKIMPGHKIGEIRSLFKKIEMSPEELMKKLDEIRREVEKERPDLLR</sequence>
<evidence type="ECO:0000255" key="1">
    <source>
        <dbReference type="HAMAP-Rule" id="MF_00098"/>
    </source>
</evidence>
<feature type="chain" id="PRO_0000139199" description="Methionine--tRNA ligase">
    <location>
        <begin position="1"/>
        <end position="571"/>
    </location>
</feature>
<feature type="short sequence motif" description="'HIGH' region">
    <location>
        <begin position="10"/>
        <end position="20"/>
    </location>
</feature>
<feature type="short sequence motif" description="'KMSKS' region">
    <location>
        <begin position="333"/>
        <end position="337"/>
    </location>
</feature>
<feature type="binding site" evidence="1">
    <location>
        <position position="143"/>
    </location>
    <ligand>
        <name>Zn(2+)</name>
        <dbReference type="ChEBI" id="CHEBI:29105"/>
    </ligand>
</feature>
<feature type="binding site" evidence="1">
    <location>
        <position position="146"/>
    </location>
    <ligand>
        <name>Zn(2+)</name>
        <dbReference type="ChEBI" id="CHEBI:29105"/>
    </ligand>
</feature>
<feature type="binding site" evidence="1">
    <location>
        <position position="156"/>
    </location>
    <ligand>
        <name>Zn(2+)</name>
        <dbReference type="ChEBI" id="CHEBI:29105"/>
    </ligand>
</feature>
<feature type="binding site" evidence="1">
    <location>
        <position position="159"/>
    </location>
    <ligand>
        <name>Zn(2+)</name>
        <dbReference type="ChEBI" id="CHEBI:29105"/>
    </ligand>
</feature>
<feature type="binding site" evidence="1">
    <location>
        <position position="336"/>
    </location>
    <ligand>
        <name>ATP</name>
        <dbReference type="ChEBI" id="CHEBI:30616"/>
    </ligand>
</feature>
<protein>
    <recommendedName>
        <fullName evidence="1">Methionine--tRNA ligase</fullName>
        <ecNumber evidence="1">6.1.1.10</ecNumber>
    </recommendedName>
    <alternativeName>
        <fullName evidence="1">Methionyl-tRNA synthetase</fullName>
        <shortName evidence="1">MetRS</shortName>
    </alternativeName>
</protein>